<gene>
    <name evidence="1" type="primary">fadI</name>
    <name type="ordered locus">PBPRA0961</name>
</gene>
<dbReference type="EC" id="2.3.1.16" evidence="1"/>
<dbReference type="EMBL" id="CR378666">
    <property type="protein sequence ID" value="CAG19372.1"/>
    <property type="molecule type" value="Genomic_DNA"/>
</dbReference>
<dbReference type="RefSeq" id="WP_011217706.1">
    <property type="nucleotide sequence ID" value="NC_006370.1"/>
</dbReference>
<dbReference type="SMR" id="Q6LTK4"/>
<dbReference type="STRING" id="298386.PBPRA0961"/>
<dbReference type="KEGG" id="ppr:PBPRA0961"/>
<dbReference type="eggNOG" id="COG0183">
    <property type="taxonomic scope" value="Bacteria"/>
</dbReference>
<dbReference type="HOGENOM" id="CLU_031026_2_0_6"/>
<dbReference type="UniPathway" id="UPA00659"/>
<dbReference type="Proteomes" id="UP000000593">
    <property type="component" value="Chromosome 1"/>
</dbReference>
<dbReference type="GO" id="GO:0005829">
    <property type="term" value="C:cytosol"/>
    <property type="evidence" value="ECO:0007669"/>
    <property type="project" value="TreeGrafter"/>
</dbReference>
<dbReference type="GO" id="GO:0003988">
    <property type="term" value="F:acetyl-CoA C-acyltransferase activity"/>
    <property type="evidence" value="ECO:0007669"/>
    <property type="project" value="UniProtKB-UniRule"/>
</dbReference>
<dbReference type="GO" id="GO:0006635">
    <property type="term" value="P:fatty acid beta-oxidation"/>
    <property type="evidence" value="ECO:0007669"/>
    <property type="project" value="UniProtKB-UniRule"/>
</dbReference>
<dbReference type="CDD" id="cd00751">
    <property type="entry name" value="thiolase"/>
    <property type="match status" value="1"/>
</dbReference>
<dbReference type="FunFam" id="3.40.47.10:FF:000011">
    <property type="entry name" value="3-ketoacyl-CoA thiolase"/>
    <property type="match status" value="1"/>
</dbReference>
<dbReference type="Gene3D" id="3.40.47.10">
    <property type="match status" value="1"/>
</dbReference>
<dbReference type="HAMAP" id="MF_01618">
    <property type="entry name" value="FadI"/>
    <property type="match status" value="1"/>
</dbReference>
<dbReference type="InterPro" id="IPR050521">
    <property type="entry name" value="3-ketoacyl-CoA_Thiolase"/>
</dbReference>
<dbReference type="InterPro" id="IPR012806">
    <property type="entry name" value="Ac-CoA_C-AcTrfase_FadI"/>
</dbReference>
<dbReference type="InterPro" id="IPR002155">
    <property type="entry name" value="Thiolase"/>
</dbReference>
<dbReference type="InterPro" id="IPR016039">
    <property type="entry name" value="Thiolase-like"/>
</dbReference>
<dbReference type="InterPro" id="IPR020617">
    <property type="entry name" value="Thiolase_C"/>
</dbReference>
<dbReference type="InterPro" id="IPR020613">
    <property type="entry name" value="Thiolase_CS"/>
</dbReference>
<dbReference type="InterPro" id="IPR020616">
    <property type="entry name" value="Thiolase_N"/>
</dbReference>
<dbReference type="NCBIfam" id="TIGR01930">
    <property type="entry name" value="AcCoA-C-Actrans"/>
    <property type="match status" value="1"/>
</dbReference>
<dbReference type="NCBIfam" id="TIGR02446">
    <property type="entry name" value="FadI"/>
    <property type="match status" value="1"/>
</dbReference>
<dbReference type="NCBIfam" id="NF006516">
    <property type="entry name" value="PRK08963.1"/>
    <property type="match status" value="1"/>
</dbReference>
<dbReference type="PANTHER" id="PTHR42689">
    <property type="entry name" value="ACETYL-COA ACYLTRANSFERASE FADA2 (3-KETOACYL-COA THIOLASE) (BETA-KETOTHIOLASE)-RELATED"/>
    <property type="match status" value="1"/>
</dbReference>
<dbReference type="PANTHER" id="PTHR42689:SF1">
    <property type="entry name" value="ACETYL-COA ACYLTRANSFERASE FADA2 (3-KETOACYL-COA THIOLASE) (BETA-KETOTHIOLASE)-RELATED"/>
    <property type="match status" value="1"/>
</dbReference>
<dbReference type="Pfam" id="PF02803">
    <property type="entry name" value="Thiolase_C"/>
    <property type="match status" value="1"/>
</dbReference>
<dbReference type="Pfam" id="PF00108">
    <property type="entry name" value="Thiolase_N"/>
    <property type="match status" value="1"/>
</dbReference>
<dbReference type="PIRSF" id="PIRSF000429">
    <property type="entry name" value="Ac-CoA_Ac_transf"/>
    <property type="match status" value="1"/>
</dbReference>
<dbReference type="SUPFAM" id="SSF53901">
    <property type="entry name" value="Thiolase-like"/>
    <property type="match status" value="2"/>
</dbReference>
<dbReference type="PROSITE" id="PS00737">
    <property type="entry name" value="THIOLASE_2"/>
    <property type="match status" value="1"/>
</dbReference>
<comment type="function">
    <text evidence="1">Catalyzes the final step of fatty acid oxidation in which acetyl-CoA is released and the CoA ester of a fatty acid two carbons shorter is formed.</text>
</comment>
<comment type="catalytic activity">
    <reaction evidence="1">
        <text>an acyl-CoA + acetyl-CoA = a 3-oxoacyl-CoA + CoA</text>
        <dbReference type="Rhea" id="RHEA:21564"/>
        <dbReference type="ChEBI" id="CHEBI:57287"/>
        <dbReference type="ChEBI" id="CHEBI:57288"/>
        <dbReference type="ChEBI" id="CHEBI:58342"/>
        <dbReference type="ChEBI" id="CHEBI:90726"/>
        <dbReference type="EC" id="2.3.1.16"/>
    </reaction>
</comment>
<comment type="pathway">
    <text evidence="1">Lipid metabolism; fatty acid beta-oxidation.</text>
</comment>
<comment type="subunit">
    <text evidence="1">Heterotetramer of two alpha chains (FadJ) and two beta chains (FadI).</text>
</comment>
<comment type="subcellular location">
    <subcellularLocation>
        <location evidence="1">Cytoplasm</location>
    </subcellularLocation>
</comment>
<comment type="similarity">
    <text evidence="1">Belongs to the thiolase-like superfamily. Thiolase family.</text>
</comment>
<proteinExistence type="inferred from homology"/>
<protein>
    <recommendedName>
        <fullName evidence="1">3-ketoacyl-CoA thiolase</fullName>
        <ecNumber evidence="1">2.3.1.16</ecNumber>
    </recommendedName>
    <alternativeName>
        <fullName evidence="1">ACSs</fullName>
    </alternativeName>
    <alternativeName>
        <fullName evidence="1">Acetyl-CoA acyltransferase</fullName>
    </alternativeName>
    <alternativeName>
        <fullName evidence="1">Acyl-CoA ligase</fullName>
    </alternativeName>
    <alternativeName>
        <fullName evidence="1">Beta-ketothiolase</fullName>
    </alternativeName>
    <alternativeName>
        <fullName evidence="1">Fatty acid oxidation complex subunit beta</fullName>
    </alternativeName>
</protein>
<feature type="chain" id="PRO_0000206441" description="3-ketoacyl-CoA thiolase">
    <location>
        <begin position="1"/>
        <end position="436"/>
    </location>
</feature>
<feature type="active site" description="Acyl-thioester intermediate" evidence="1">
    <location>
        <position position="99"/>
    </location>
</feature>
<feature type="active site" description="Proton acceptor" evidence="1">
    <location>
        <position position="392"/>
    </location>
</feature>
<feature type="active site" description="Proton acceptor" evidence="1">
    <location>
        <position position="422"/>
    </location>
</feature>
<name>FADI_PHOPR</name>
<keyword id="KW-0012">Acyltransferase</keyword>
<keyword id="KW-0963">Cytoplasm</keyword>
<keyword id="KW-0276">Fatty acid metabolism</keyword>
<keyword id="KW-0442">Lipid degradation</keyword>
<keyword id="KW-0443">Lipid metabolism</keyword>
<keyword id="KW-1185">Reference proteome</keyword>
<keyword id="KW-0808">Transferase</keyword>
<reference key="1">
    <citation type="journal article" date="2005" name="Science">
        <title>Life at depth: Photobacterium profundum genome sequence and expression analysis.</title>
        <authorList>
            <person name="Vezzi A."/>
            <person name="Campanaro S."/>
            <person name="D'Angelo M."/>
            <person name="Simonato F."/>
            <person name="Vitulo N."/>
            <person name="Lauro F.M."/>
            <person name="Cestaro A."/>
            <person name="Malacrida G."/>
            <person name="Simionati B."/>
            <person name="Cannata N."/>
            <person name="Romualdi C."/>
            <person name="Bartlett D.H."/>
            <person name="Valle G."/>
        </authorList>
    </citation>
    <scope>NUCLEOTIDE SEQUENCE [LARGE SCALE GENOMIC DNA]</scope>
    <source>
        <strain>ATCC BAA-1253 / SS9</strain>
    </source>
</reference>
<organism>
    <name type="scientific">Photobacterium profundum (strain SS9)</name>
    <dbReference type="NCBI Taxonomy" id="298386"/>
    <lineage>
        <taxon>Bacteria</taxon>
        <taxon>Pseudomonadati</taxon>
        <taxon>Pseudomonadota</taxon>
        <taxon>Gammaproteobacteria</taxon>
        <taxon>Vibrionales</taxon>
        <taxon>Vibrionaceae</taxon>
        <taxon>Photobacterium</taxon>
    </lineage>
</organism>
<evidence type="ECO:0000255" key="1">
    <source>
        <dbReference type="HAMAP-Rule" id="MF_01618"/>
    </source>
</evidence>
<accession>Q6LTK4</accession>
<sequence>MTRLQNLTTRQGERIAVVSGLRTPFARQATAFNGVPALDMGKMVVNEMLQELDFDPKLIEQVVFGQVVQMPEAPNIAREIVLGTGMHIGTDAYSVTRACATSFQAAANVAESIISGTIDIGIAGGADSSSVLPIGVSKKLAATLLALSKARTMSKRLKLLSTLSVKDLMPVPPAVAEYSTGISMGQTAEQMAKSHGITRQEQDALAYRSHTLAAKAWKDGLIRGEVMTAFPEPYGQWIDKDNNIREDSTLESYAKLRPAFDRKFGTVTAANSTPLTDGAAAILLMREGRAKELGLKPLGYIRSYAFSAIGVEQDMLMGPSYATPMALDRAGISLSDLTLIDMHEAFAAQTLANVKMFGSKKFAQENLGRSQAIGEIDMDKFNVLGGSLAYGHPFAATGARMITQTLRELQRRGGGFALNTACAAGGLGAAMILEAE</sequence>